<sequence>MKAKEIRDLTTSEIEEQIKSSKEELFNLRFQLATGQLEETARIRTVRKTIARLKTVAREREIEQSKANQ</sequence>
<reference key="1">
    <citation type="journal article" date="2009" name="Appl. Environ. Microbiol.">
        <title>Genome analysis of the meat starter culture bacterium Staphylococcus carnosus TM300.</title>
        <authorList>
            <person name="Rosenstein R."/>
            <person name="Nerz C."/>
            <person name="Biswas L."/>
            <person name="Resch A."/>
            <person name="Raddatz G."/>
            <person name="Schuster S.C."/>
            <person name="Goetz F."/>
        </authorList>
    </citation>
    <scope>NUCLEOTIDE SEQUENCE [LARGE SCALE GENOMIC DNA]</scope>
    <source>
        <strain>TM300</strain>
    </source>
</reference>
<proteinExistence type="inferred from homology"/>
<name>RL29_STACT</name>
<accession>B9DM39</accession>
<comment type="similarity">
    <text evidence="1">Belongs to the universal ribosomal protein uL29 family.</text>
</comment>
<evidence type="ECO:0000255" key="1">
    <source>
        <dbReference type="HAMAP-Rule" id="MF_00374"/>
    </source>
</evidence>
<evidence type="ECO:0000305" key="2"/>
<dbReference type="EMBL" id="AM295250">
    <property type="protein sequence ID" value="CAL28633.1"/>
    <property type="molecule type" value="Genomic_DNA"/>
</dbReference>
<dbReference type="RefSeq" id="WP_000644737.1">
    <property type="nucleotide sequence ID" value="NC_012121.1"/>
</dbReference>
<dbReference type="SMR" id="B9DM39"/>
<dbReference type="GeneID" id="98346554"/>
<dbReference type="KEGG" id="sca:SCA_1727"/>
<dbReference type="eggNOG" id="COG0255">
    <property type="taxonomic scope" value="Bacteria"/>
</dbReference>
<dbReference type="HOGENOM" id="CLU_158491_5_2_9"/>
<dbReference type="OrthoDB" id="9815192at2"/>
<dbReference type="BioCyc" id="SCAR396513:SCA_RS08800-MONOMER"/>
<dbReference type="Proteomes" id="UP000000444">
    <property type="component" value="Chromosome"/>
</dbReference>
<dbReference type="GO" id="GO:0022625">
    <property type="term" value="C:cytosolic large ribosomal subunit"/>
    <property type="evidence" value="ECO:0007669"/>
    <property type="project" value="TreeGrafter"/>
</dbReference>
<dbReference type="GO" id="GO:0003735">
    <property type="term" value="F:structural constituent of ribosome"/>
    <property type="evidence" value="ECO:0007669"/>
    <property type="project" value="InterPro"/>
</dbReference>
<dbReference type="GO" id="GO:0006412">
    <property type="term" value="P:translation"/>
    <property type="evidence" value="ECO:0007669"/>
    <property type="project" value="UniProtKB-UniRule"/>
</dbReference>
<dbReference type="CDD" id="cd00427">
    <property type="entry name" value="Ribosomal_L29_HIP"/>
    <property type="match status" value="1"/>
</dbReference>
<dbReference type="FunFam" id="1.10.287.310:FF:000001">
    <property type="entry name" value="50S ribosomal protein L29"/>
    <property type="match status" value="1"/>
</dbReference>
<dbReference type="Gene3D" id="1.10.287.310">
    <property type="match status" value="1"/>
</dbReference>
<dbReference type="HAMAP" id="MF_00374">
    <property type="entry name" value="Ribosomal_uL29"/>
    <property type="match status" value="1"/>
</dbReference>
<dbReference type="InterPro" id="IPR050063">
    <property type="entry name" value="Ribosomal_protein_uL29"/>
</dbReference>
<dbReference type="InterPro" id="IPR001854">
    <property type="entry name" value="Ribosomal_uL29"/>
</dbReference>
<dbReference type="InterPro" id="IPR036049">
    <property type="entry name" value="Ribosomal_uL29_sf"/>
</dbReference>
<dbReference type="NCBIfam" id="TIGR00012">
    <property type="entry name" value="L29"/>
    <property type="match status" value="1"/>
</dbReference>
<dbReference type="PANTHER" id="PTHR10916">
    <property type="entry name" value="60S RIBOSOMAL PROTEIN L35/50S RIBOSOMAL PROTEIN L29"/>
    <property type="match status" value="1"/>
</dbReference>
<dbReference type="PANTHER" id="PTHR10916:SF0">
    <property type="entry name" value="LARGE RIBOSOMAL SUBUNIT PROTEIN UL29C"/>
    <property type="match status" value="1"/>
</dbReference>
<dbReference type="Pfam" id="PF00831">
    <property type="entry name" value="Ribosomal_L29"/>
    <property type="match status" value="1"/>
</dbReference>
<dbReference type="SUPFAM" id="SSF46561">
    <property type="entry name" value="Ribosomal protein L29 (L29p)"/>
    <property type="match status" value="1"/>
</dbReference>
<protein>
    <recommendedName>
        <fullName evidence="1">Large ribosomal subunit protein uL29</fullName>
    </recommendedName>
    <alternativeName>
        <fullName evidence="2">50S ribosomal protein L29</fullName>
    </alternativeName>
</protein>
<organism>
    <name type="scientific">Staphylococcus carnosus (strain TM300)</name>
    <dbReference type="NCBI Taxonomy" id="396513"/>
    <lineage>
        <taxon>Bacteria</taxon>
        <taxon>Bacillati</taxon>
        <taxon>Bacillota</taxon>
        <taxon>Bacilli</taxon>
        <taxon>Bacillales</taxon>
        <taxon>Staphylococcaceae</taxon>
        <taxon>Staphylococcus</taxon>
    </lineage>
</organism>
<gene>
    <name evidence="1" type="primary">rpmC</name>
    <name type="ordered locus">Sca_1727</name>
</gene>
<feature type="chain" id="PRO_1000194032" description="Large ribosomal subunit protein uL29">
    <location>
        <begin position="1"/>
        <end position="69"/>
    </location>
</feature>
<keyword id="KW-1185">Reference proteome</keyword>
<keyword id="KW-0687">Ribonucleoprotein</keyword>
<keyword id="KW-0689">Ribosomal protein</keyword>